<evidence type="ECO:0000250" key="1"/>
<evidence type="ECO:0000255" key="2"/>
<evidence type="ECO:0000305" key="3"/>
<dbReference type="EMBL" id="CR378670">
    <property type="protein sequence ID" value="CAG20577.1"/>
    <property type="molecule type" value="Genomic_DNA"/>
</dbReference>
<dbReference type="RefSeq" id="WP_011218868.1">
    <property type="nucleotide sequence ID" value="NC_006370.1"/>
</dbReference>
<dbReference type="SMR" id="Q6LQ49"/>
<dbReference type="KEGG" id="ppr:PBPRA2180"/>
<dbReference type="eggNOG" id="COG0534">
    <property type="taxonomic scope" value="Bacteria"/>
</dbReference>
<dbReference type="HOGENOM" id="CLU_012893_6_0_6"/>
<dbReference type="Proteomes" id="UP000000593">
    <property type="component" value="Chromosome 1"/>
</dbReference>
<dbReference type="GO" id="GO:0005886">
    <property type="term" value="C:plasma membrane"/>
    <property type="evidence" value="ECO:0007669"/>
    <property type="project" value="UniProtKB-SubCell"/>
</dbReference>
<dbReference type="GO" id="GO:0015297">
    <property type="term" value="F:antiporter activity"/>
    <property type="evidence" value="ECO:0007669"/>
    <property type="project" value="UniProtKB-KW"/>
</dbReference>
<dbReference type="GO" id="GO:0042910">
    <property type="term" value="F:xenobiotic transmembrane transporter activity"/>
    <property type="evidence" value="ECO:0007669"/>
    <property type="project" value="InterPro"/>
</dbReference>
<dbReference type="GO" id="GO:0006814">
    <property type="term" value="P:sodium ion transport"/>
    <property type="evidence" value="ECO:0007669"/>
    <property type="project" value="UniProtKB-KW"/>
</dbReference>
<dbReference type="CDD" id="cd13131">
    <property type="entry name" value="MATE_NorM_like"/>
    <property type="match status" value="1"/>
</dbReference>
<dbReference type="InterPro" id="IPR002528">
    <property type="entry name" value="MATE_fam"/>
</dbReference>
<dbReference type="InterPro" id="IPR050222">
    <property type="entry name" value="MATE_MdtK"/>
</dbReference>
<dbReference type="InterPro" id="IPR048279">
    <property type="entry name" value="MdtK-like"/>
</dbReference>
<dbReference type="NCBIfam" id="TIGR00797">
    <property type="entry name" value="matE"/>
    <property type="match status" value="1"/>
</dbReference>
<dbReference type="PANTHER" id="PTHR43298:SF2">
    <property type="entry name" value="FMN_FAD EXPORTER YEEO-RELATED"/>
    <property type="match status" value="1"/>
</dbReference>
<dbReference type="PANTHER" id="PTHR43298">
    <property type="entry name" value="MULTIDRUG RESISTANCE PROTEIN NORM-RELATED"/>
    <property type="match status" value="1"/>
</dbReference>
<dbReference type="Pfam" id="PF01554">
    <property type="entry name" value="MatE"/>
    <property type="match status" value="2"/>
</dbReference>
<dbReference type="PIRSF" id="PIRSF006603">
    <property type="entry name" value="DinF"/>
    <property type="match status" value="1"/>
</dbReference>
<gene>
    <name type="primary">norM</name>
    <name type="ordered locus">PBPRA2180</name>
</gene>
<organism>
    <name type="scientific">Photobacterium profundum (strain SS9)</name>
    <dbReference type="NCBI Taxonomy" id="298386"/>
    <lineage>
        <taxon>Bacteria</taxon>
        <taxon>Pseudomonadati</taxon>
        <taxon>Pseudomonadota</taxon>
        <taxon>Gammaproteobacteria</taxon>
        <taxon>Vibrionales</taxon>
        <taxon>Vibrionaceae</taxon>
        <taxon>Photobacterium</taxon>
    </lineage>
</organism>
<comment type="function">
    <text evidence="1">Multidrug efflux pump that functions as a Na(+)/drug antiporter.</text>
</comment>
<comment type="subcellular location">
    <subcellularLocation>
        <location evidence="1">Cell inner membrane</location>
        <topology evidence="1">Multi-pass membrane protein</topology>
    </subcellularLocation>
</comment>
<comment type="similarity">
    <text evidence="3">Belongs to the multi antimicrobial extrusion (MATE) (TC 2.A.66.1) family.</text>
</comment>
<reference key="1">
    <citation type="journal article" date="2005" name="Science">
        <title>Life at depth: Photobacterium profundum genome sequence and expression analysis.</title>
        <authorList>
            <person name="Vezzi A."/>
            <person name="Campanaro S."/>
            <person name="D'Angelo M."/>
            <person name="Simonato F."/>
            <person name="Vitulo N."/>
            <person name="Lauro F.M."/>
            <person name="Cestaro A."/>
            <person name="Malacrida G."/>
            <person name="Simionati B."/>
            <person name="Cannata N."/>
            <person name="Romualdi C."/>
            <person name="Bartlett D.H."/>
            <person name="Valle G."/>
        </authorList>
    </citation>
    <scope>NUCLEOTIDE SEQUENCE [LARGE SCALE GENOMIC DNA]</scope>
    <source>
        <strain>ATCC BAA-1253 / SS9</strain>
    </source>
</reference>
<proteinExistence type="inferred from homology"/>
<sequence>MHNYRRETRQLLTLAIPVLIASVAQTSMGFVDTVMAGGVSATDMAAVSVASSIWLPAILFGVGLLIALVPIVAQLNGSGKKDKIPFEVQHGFLLALIISVPIMAILYNAGMLIDYMDVEPILAEKTIGYLHAVVYAVPAFLLFQTLRSFAEGLSLTVPGMVIGFIGLMANIPLNWIFVYGKFGFPEMGGVGCGVATAIVYWLMFFSMLVYVLVNKRLKRAGLFDVWYKPQPKAVLRLFKLGFPVAASMFFEVSLFAVIALMISPLGSIIVASHQVAINFSSLVFMLPMSLGIALSIRVGHMLGEQDLVGAKIASHCGLIVGLIMSLMTAILTIIYREEIALLYTDNADVIVLAGQLLFLAAVYQCSDAIQVVAAGALRGYKDMRAIFIRTFIAYWMLGLPVGYILGMTDWIVEPMGPHGFWIGNIVGLSAAAIMLAMRLRWIQCQSDEFQIAMSLK</sequence>
<keyword id="KW-0050">Antiport</keyword>
<keyword id="KW-0997">Cell inner membrane</keyword>
<keyword id="KW-1003">Cell membrane</keyword>
<keyword id="KW-0406">Ion transport</keyword>
<keyword id="KW-0472">Membrane</keyword>
<keyword id="KW-1185">Reference proteome</keyword>
<keyword id="KW-0915">Sodium</keyword>
<keyword id="KW-0739">Sodium transport</keyword>
<keyword id="KW-0812">Transmembrane</keyword>
<keyword id="KW-1133">Transmembrane helix</keyword>
<keyword id="KW-0813">Transport</keyword>
<accession>Q6LQ49</accession>
<name>NORM_PHOPR</name>
<feature type="chain" id="PRO_0000164230" description="Multidrug resistance protein NorM">
    <location>
        <begin position="1"/>
        <end position="456"/>
    </location>
</feature>
<feature type="transmembrane region" description="Helical" evidence="2">
    <location>
        <begin position="11"/>
        <end position="31"/>
    </location>
</feature>
<feature type="transmembrane region" description="Helical" evidence="2">
    <location>
        <begin position="53"/>
        <end position="73"/>
    </location>
</feature>
<feature type="transmembrane region" description="Helical" evidence="2">
    <location>
        <begin position="93"/>
        <end position="113"/>
    </location>
</feature>
<feature type="transmembrane region" description="Helical" evidence="2">
    <location>
        <begin position="126"/>
        <end position="146"/>
    </location>
</feature>
<feature type="transmembrane region" description="Helical" evidence="2">
    <location>
        <begin position="159"/>
        <end position="179"/>
    </location>
</feature>
<feature type="transmembrane region" description="Helical" evidence="2">
    <location>
        <begin position="193"/>
        <end position="213"/>
    </location>
</feature>
<feature type="transmembrane region" description="Helical" evidence="2">
    <location>
        <begin position="242"/>
        <end position="262"/>
    </location>
</feature>
<feature type="transmembrane region" description="Helical" evidence="2">
    <location>
        <begin position="276"/>
        <end position="296"/>
    </location>
</feature>
<feature type="transmembrane region" description="Helical" evidence="2">
    <location>
        <begin position="315"/>
        <end position="335"/>
    </location>
</feature>
<feature type="transmembrane region" description="Helical" evidence="2">
    <location>
        <begin position="349"/>
        <end position="369"/>
    </location>
</feature>
<feature type="transmembrane region" description="Helical" evidence="2">
    <location>
        <begin position="391"/>
        <end position="411"/>
    </location>
</feature>
<feature type="transmembrane region" description="Helical" evidence="2">
    <location>
        <begin position="417"/>
        <end position="437"/>
    </location>
</feature>
<protein>
    <recommendedName>
        <fullName>Multidrug resistance protein NorM</fullName>
    </recommendedName>
    <alternativeName>
        <fullName>Multidrug-efflux transporter</fullName>
    </alternativeName>
    <alternativeName>
        <fullName>Na(+)/drug antiporter</fullName>
    </alternativeName>
</protein>